<gene>
    <name evidence="2" type="primary">dinB</name>
    <name evidence="4" type="ordered locus">TTE0254</name>
</gene>
<sequence>MKRKIIHVDMDAFFASIEQQDNPEYRGKPVIVGGLSGRGVVSTCSYEARKYGIHSAMPMYMAKKLCPQGIFLPVRRKRYEEVSEQIFRILYDITPFVEPVSIDEAYLDVTHVDKNPEDIALEIKKRVKDATGLTVSVGISYNKFLAKLASDWNKPDGLMVITEDMVPEILKPLPVTKVHGIGEKSAEKLRSIGIETVEDLLKLPQENLIELFGKTGVEIYNRIRGIDERPVETMREIKSIGKEKTLEKDTKNKELLIQHLKEFSEIVSEELIKERLYCRTVTVKIKTADFAVHTKSKTVDKYIRFSEDIYEVAKGILEEWKLEQYVRLIGLSVSNLSPVKYEQLSFLDKRLVKVIKAGNLAEEINKRIGKKIIKKGSELLKDNK</sequence>
<reference key="1">
    <citation type="journal article" date="2002" name="Genome Res.">
        <title>A complete sequence of the T. tengcongensis genome.</title>
        <authorList>
            <person name="Bao Q."/>
            <person name="Tian Y."/>
            <person name="Li W."/>
            <person name="Xu Z."/>
            <person name="Xuan Z."/>
            <person name="Hu S."/>
            <person name="Dong W."/>
            <person name="Yang J."/>
            <person name="Chen Y."/>
            <person name="Xue Y."/>
            <person name="Xu Y."/>
            <person name="Lai X."/>
            <person name="Huang L."/>
            <person name="Dong X."/>
            <person name="Ma Y."/>
            <person name="Ling L."/>
            <person name="Tan H."/>
            <person name="Chen R."/>
            <person name="Wang J."/>
            <person name="Yu J."/>
            <person name="Yang H."/>
        </authorList>
    </citation>
    <scope>NUCLEOTIDE SEQUENCE [LARGE SCALE GENOMIC DNA]</scope>
    <source>
        <strain>DSM 15242 / JCM 11007 / NBRC 100824 / MB4</strain>
    </source>
</reference>
<reference key="2">
    <citation type="journal article" date="2023" name="Int. J. Biol. Macromol.">
        <title>Structure and function of extreme TLS DNA polymerase TTEDbh from Thermoanaerobacter tengcongensis.</title>
        <authorList>
            <person name="Tian L.F."/>
            <person name="Gao H."/>
            <person name="Yang S."/>
            <person name="Liu Y.P."/>
            <person name="Li M."/>
            <person name="Xu W."/>
            <person name="Yan X.X."/>
        </authorList>
    </citation>
    <scope>X-RAY CRYSTALLOGRAPHY (2.6 ANGSTROMS) IN COMPLEX WITH MAGNESIUM</scope>
    <scope>FUNCTION</scope>
    <scope>CATALYTIC ACTIVITY</scope>
    <scope>COFACTOR</scope>
    <scope>BIOPHYSICOCHEMICAL PROPERTIES</scope>
    <scope>SUBUNIT</scope>
    <scope>DOMAIN</scope>
    <scope>MUTAGENESIS OF ASP-9; MET-10; ALA-12; PHE-13; PHE-14; ARG-38; SER-42; THR-43; TYR-46; ARG-49; ALA-56; ASP-103; LYS-147; LYS-154; GLY-180; GLY-182; SER-185; ILE-240; GLY-241; THR-245; PHE-290; LYS-297; THR-298; ARG-327 AND LEU-328</scope>
    <scope>3D-STRUCTURE MODELING IN COMPLEX WITH DOUBLE STRANDED DNA</scope>
</reference>
<evidence type="ECO:0000250" key="1">
    <source>
        <dbReference type="UniProtKB" id="Q47155"/>
    </source>
</evidence>
<evidence type="ECO:0000255" key="2">
    <source>
        <dbReference type="HAMAP-Rule" id="MF_01113"/>
    </source>
</evidence>
<evidence type="ECO:0000269" key="3">
    <source>
    </source>
</evidence>
<evidence type="ECO:0000303" key="4">
    <source>
    </source>
</evidence>
<evidence type="ECO:0000305" key="5">
    <source>
    </source>
</evidence>
<evidence type="ECO:0007744" key="6">
    <source>
        <dbReference type="PDB" id="7YLL"/>
    </source>
</evidence>
<proteinExistence type="evidence at protein level"/>
<keyword id="KW-0002">3D-structure</keyword>
<keyword id="KW-0963">Cytoplasm</keyword>
<keyword id="KW-0227">DNA damage</keyword>
<keyword id="KW-0234">DNA repair</keyword>
<keyword id="KW-0235">DNA replication</keyword>
<keyword id="KW-0238">DNA-binding</keyword>
<keyword id="KW-0239">DNA-directed DNA polymerase</keyword>
<keyword id="KW-0460">Magnesium</keyword>
<keyword id="KW-0479">Metal-binding</keyword>
<keyword id="KW-0515">Mutator protein</keyword>
<keyword id="KW-0548">Nucleotidyltransferase</keyword>
<keyword id="KW-1185">Reference proteome</keyword>
<keyword id="KW-0808">Transferase</keyword>
<dbReference type="EC" id="2.7.7.7" evidence="2 3"/>
<dbReference type="EMBL" id="AE008691">
    <property type="protein sequence ID" value="AAM23550.1"/>
    <property type="molecule type" value="Genomic_DNA"/>
</dbReference>
<dbReference type="RefSeq" id="WP_009609988.1">
    <property type="nucleotide sequence ID" value="NC_003869.1"/>
</dbReference>
<dbReference type="PDB" id="7YLL">
    <property type="method" value="X-ray"/>
    <property type="resolution" value="2.60 A"/>
    <property type="chains" value="A=1-384"/>
</dbReference>
<dbReference type="PDBsum" id="7YLL"/>
<dbReference type="SMR" id="P58965"/>
<dbReference type="STRING" id="273068.TTE0254"/>
<dbReference type="KEGG" id="tte:TTE0254"/>
<dbReference type="eggNOG" id="COG0389">
    <property type="taxonomic scope" value="Bacteria"/>
</dbReference>
<dbReference type="HOGENOM" id="CLU_012348_1_2_9"/>
<dbReference type="OrthoDB" id="9808813at2"/>
<dbReference type="Proteomes" id="UP000000555">
    <property type="component" value="Chromosome"/>
</dbReference>
<dbReference type="GO" id="GO:0005737">
    <property type="term" value="C:cytoplasm"/>
    <property type="evidence" value="ECO:0000250"/>
    <property type="project" value="UniProtKB"/>
</dbReference>
<dbReference type="GO" id="GO:0005829">
    <property type="term" value="C:cytosol"/>
    <property type="evidence" value="ECO:0007669"/>
    <property type="project" value="TreeGrafter"/>
</dbReference>
<dbReference type="GO" id="GO:0003887">
    <property type="term" value="F:DNA-directed DNA polymerase activity"/>
    <property type="evidence" value="ECO:0000314"/>
    <property type="project" value="UniProtKB"/>
</dbReference>
<dbReference type="GO" id="GO:0003690">
    <property type="term" value="F:double-stranded DNA binding"/>
    <property type="evidence" value="ECO:0000314"/>
    <property type="project" value="UniProtKB"/>
</dbReference>
<dbReference type="GO" id="GO:0000287">
    <property type="term" value="F:magnesium ion binding"/>
    <property type="evidence" value="ECO:0000314"/>
    <property type="project" value="UniProtKB"/>
</dbReference>
<dbReference type="GO" id="GO:0032356">
    <property type="term" value="F:oxidized DNA binding"/>
    <property type="evidence" value="ECO:0000314"/>
    <property type="project" value="UniProtKB"/>
</dbReference>
<dbReference type="GO" id="GO:0000731">
    <property type="term" value="P:DNA synthesis involved in DNA repair"/>
    <property type="evidence" value="ECO:0000314"/>
    <property type="project" value="UniProtKB"/>
</dbReference>
<dbReference type="GO" id="GO:0006261">
    <property type="term" value="P:DNA-templated DNA replication"/>
    <property type="evidence" value="ECO:0000314"/>
    <property type="project" value="UniProtKB"/>
</dbReference>
<dbReference type="GO" id="GO:0042276">
    <property type="term" value="P:error-prone translesion synthesis"/>
    <property type="evidence" value="ECO:0000314"/>
    <property type="project" value="UniProtKB"/>
</dbReference>
<dbReference type="GO" id="GO:0009432">
    <property type="term" value="P:SOS response"/>
    <property type="evidence" value="ECO:0007669"/>
    <property type="project" value="TreeGrafter"/>
</dbReference>
<dbReference type="CDD" id="cd03586">
    <property type="entry name" value="PolY_Pol_IV_kappa"/>
    <property type="match status" value="1"/>
</dbReference>
<dbReference type="FunFam" id="3.30.1490.100:FF:000004">
    <property type="entry name" value="DNA polymerase IV"/>
    <property type="match status" value="1"/>
</dbReference>
<dbReference type="FunFam" id="3.40.1170.60:FF:000001">
    <property type="entry name" value="DNA polymerase IV"/>
    <property type="match status" value="1"/>
</dbReference>
<dbReference type="Gene3D" id="3.30.70.270">
    <property type="match status" value="1"/>
</dbReference>
<dbReference type="Gene3D" id="3.40.1170.60">
    <property type="match status" value="1"/>
</dbReference>
<dbReference type="Gene3D" id="1.10.150.20">
    <property type="entry name" value="5' to 3' exonuclease, C-terminal subdomain"/>
    <property type="match status" value="1"/>
</dbReference>
<dbReference type="Gene3D" id="3.30.1490.100">
    <property type="entry name" value="DNA polymerase, Y-family, little finger domain"/>
    <property type="match status" value="1"/>
</dbReference>
<dbReference type="HAMAP" id="MF_01113">
    <property type="entry name" value="DNApol_IV"/>
    <property type="match status" value="1"/>
</dbReference>
<dbReference type="InterPro" id="IPR043502">
    <property type="entry name" value="DNA/RNA_pol_sf"/>
</dbReference>
<dbReference type="InterPro" id="IPR036775">
    <property type="entry name" value="DNA_pol_Y-fam_lit_finger_sf"/>
</dbReference>
<dbReference type="InterPro" id="IPR017961">
    <property type="entry name" value="DNA_pol_Y-fam_little_finger"/>
</dbReference>
<dbReference type="InterPro" id="IPR050116">
    <property type="entry name" value="DNA_polymerase-Y"/>
</dbReference>
<dbReference type="InterPro" id="IPR022880">
    <property type="entry name" value="DNApol_IV"/>
</dbReference>
<dbReference type="InterPro" id="IPR053848">
    <property type="entry name" value="IMS_HHH_1"/>
</dbReference>
<dbReference type="InterPro" id="IPR043128">
    <property type="entry name" value="Rev_trsase/Diguanyl_cyclase"/>
</dbReference>
<dbReference type="InterPro" id="IPR001126">
    <property type="entry name" value="UmuC"/>
</dbReference>
<dbReference type="NCBIfam" id="NF002677">
    <property type="entry name" value="PRK02406.1"/>
    <property type="match status" value="1"/>
</dbReference>
<dbReference type="NCBIfam" id="NF010731">
    <property type="entry name" value="PRK14133.1"/>
    <property type="match status" value="1"/>
</dbReference>
<dbReference type="PANTHER" id="PTHR11076:SF33">
    <property type="entry name" value="DNA POLYMERASE KAPPA"/>
    <property type="match status" value="1"/>
</dbReference>
<dbReference type="PANTHER" id="PTHR11076">
    <property type="entry name" value="DNA REPAIR POLYMERASE UMUC / TRANSFERASE FAMILY MEMBER"/>
    <property type="match status" value="1"/>
</dbReference>
<dbReference type="Pfam" id="PF00817">
    <property type="entry name" value="IMS"/>
    <property type="match status" value="1"/>
</dbReference>
<dbReference type="Pfam" id="PF11799">
    <property type="entry name" value="IMS_C"/>
    <property type="match status" value="1"/>
</dbReference>
<dbReference type="Pfam" id="PF21999">
    <property type="entry name" value="IMS_HHH_1"/>
    <property type="match status" value="1"/>
</dbReference>
<dbReference type="SUPFAM" id="SSF56672">
    <property type="entry name" value="DNA/RNA polymerases"/>
    <property type="match status" value="1"/>
</dbReference>
<dbReference type="SUPFAM" id="SSF100879">
    <property type="entry name" value="Lesion bypass DNA polymerase (Y-family), little finger domain"/>
    <property type="match status" value="1"/>
</dbReference>
<dbReference type="PROSITE" id="PS50173">
    <property type="entry name" value="UMUC"/>
    <property type="match status" value="1"/>
</dbReference>
<protein>
    <recommendedName>
        <fullName evidence="2">DNA polymerase IV</fullName>
        <shortName evidence="2">Pol IV</shortName>
        <ecNumber evidence="2 3">2.7.7.7</ecNumber>
    </recommendedName>
    <alternativeName>
        <fullName evidence="4">Translesion synthesis DNA polymerase TTEDbh</fullName>
        <shortName evidence="4">TLS DNA polymerase TTEDbh</shortName>
    </alternativeName>
</protein>
<organism>
    <name type="scientific">Caldanaerobacter subterraneus subsp. tengcongensis (strain DSM 15242 / JCM 11007 / NBRC 100824 / MB4)</name>
    <name type="common">Thermoanaerobacter tengcongensis</name>
    <dbReference type="NCBI Taxonomy" id="273068"/>
    <lineage>
        <taxon>Bacteria</taxon>
        <taxon>Bacillati</taxon>
        <taxon>Bacillota</taxon>
        <taxon>Clostridia</taxon>
        <taxon>Thermoanaerobacterales</taxon>
        <taxon>Thermoanaerobacteraceae</taxon>
        <taxon>Caldanaerobacter</taxon>
    </lineage>
</organism>
<feature type="chain" id="PRO_0000173960" description="DNA polymerase IV">
    <location>
        <begin position="1"/>
        <end position="384"/>
    </location>
</feature>
<feature type="domain" description="UmuC" evidence="2">
    <location>
        <begin position="5"/>
        <end position="182"/>
    </location>
</feature>
<feature type="active site" evidence="2">
    <location>
        <position position="104"/>
    </location>
</feature>
<feature type="binding site" evidence="2 3 6">
    <location>
        <position position="9"/>
    </location>
    <ligand>
        <name>Mg(2+)</name>
        <dbReference type="ChEBI" id="CHEBI:18420"/>
    </ligand>
</feature>
<feature type="binding site" evidence="3 6">
    <location>
        <position position="10"/>
    </location>
    <ligand>
        <name>Mg(2+)</name>
        <dbReference type="ChEBI" id="CHEBI:18420"/>
    </ligand>
</feature>
<feature type="binding site" evidence="2 3 6">
    <location>
        <position position="103"/>
    </location>
    <ligand>
        <name>Mg(2+)</name>
        <dbReference type="ChEBI" id="CHEBI:18420"/>
    </ligand>
</feature>
<feature type="site" description="Substrate discrimination" evidence="2">
    <location>
        <position position="14"/>
    </location>
</feature>
<feature type="mutagenesis site" description="Nearly complete loss of primer extension activity. No formation of correct or incorrect base pairs with the DNA template at 37 degrees Celsius. No incorporation of dATP, dGTP, dCTP, dTTP or dNTP mixes opposite 8-oxo-dG to bypass oxidative damage of the DNA template at neither 37 nor 70 degrees Celsius." evidence="3">
    <original>D</original>
    <variation>A</variation>
    <location>
        <position position="9"/>
    </location>
</feature>
<feature type="mutagenesis site" description="Increased primer extension activity compared to wild-type. Increased formation of incorrect base pairs with the DNA template at 37 degrees Celsius. Increased incorporation of dNTPs, especially dTTP, opposite 8-oxo-dG to bypass oxidative damage of the DNA template at 37 degrees Celsius, but shows no difference from wild-type at 70 degrees Celsius." evidence="3">
    <original>M</original>
    <variation>A</variation>
    <location>
        <position position="10"/>
    </location>
</feature>
<feature type="mutagenesis site" description="Decreased primer extension activity compared to wild-type. Forms correct, but not incorrect base pairs with the DNA template at 37 degrees Celsius. Can only incorporate dATP opposite 8-oxo-dG to bypass oxidative damage of the DNA template at 37 degrees Celsius, but complete loss of the bypass ability at 70 degrees Celsius." evidence="3">
    <original>A</original>
    <variation>E</variation>
    <location>
        <position position="12"/>
    </location>
</feature>
<feature type="mutagenesis site" description="Increased primer extension activity compared to wild-type. Increased formation of incorrect base pairs with the DNA template at 37 degrees Celsius. No difference from wild-type on the incorporation of dNTPs opposite 8-oxo-dG to bypass oxidative damage of the DNA template at 37 degrees Celsius, but partial loss of the bypass ability at 70 degrees Celsius." evidence="3">
    <original>F</original>
    <variation>A</variation>
    <location>
        <position position="13"/>
    </location>
</feature>
<feature type="mutagenesis site" description="Decreased primer extension activity compared to wild-type. Forms correct, but not incorrect base pairs with the DNA template at 37 degrees Celsius. Can only incorporate dATP opposite 8-oxo-dG to bypass oxidative damage of the DNA template at 37 degrees Celsius, but complete loss of the bypass ability at 70 degrees Celsius." evidence="3">
    <original>F</original>
    <variation>A</variation>
    <location>
        <position position="14"/>
    </location>
</feature>
<feature type="mutagenesis site" description="20-fold lower dsDNA-binding compared to wild-type. Bypasses 8-oxo-dG oxidative damage of the DNA template at 37 degrees Celsius, but complete loss of the bypass ability at 70 degrees Celsius." evidence="3">
    <original>R</original>
    <variation>A</variation>
    <location>
        <position position="38"/>
    </location>
</feature>
<feature type="mutagenesis site" description="Decreased primer extension activity compared to wild-type. Loss of dCTP incorporation opposite adenine, but retained ability to form other incorrect base pairs with the DNA template at 37 degrees Celsius. No difference from wild-type on the incorporation of dNTPs opposite 8-oxo-dG to bypass oxidative damage of the DNA template at 37 degrees Celsius, but partial loss of the bypass ability at 70 degrees Celsius." evidence="3">
    <original>S</original>
    <variation>A</variation>
    <location>
        <position position="42"/>
    </location>
</feature>
<feature type="mutagenesis site" description="Decreased primer extension activity compared to wild-type. Partially retained formation of incorrect base pairs with the DNA template at 37 degrees Celsius. No difference from wild-type on the incorporation of dNTPs opposite 8-oxo-dG to bypass oxidative damage of the DNA template at 37 degrees Celsius, but partial loss of the bypass ability at 70 degrees Celsius." evidence="3">
    <original>T</original>
    <variation>A</variation>
    <location>
        <position position="43"/>
    </location>
</feature>
<feature type="mutagenesis site" description="Decreased primer extension activity compared to wild-type. Forms correct, but not incorrect base pairs with the DNA template at 37 degrees Celsius. No difference from wild-type on the incorporation of dNTPs opposite 8-oxo-dG to bypass oxidative damage of the DNA template at 37 degrees Celsius, but complete loss of the bypass ability at 70 degrees Celsius." evidence="3">
    <original>Y</original>
    <variation>A</variation>
    <location>
        <position position="46"/>
    </location>
</feature>
<feature type="mutagenesis site" description="Decreased primer extension activity compared to wild-type. Forms correct, but not incorrect base pairs with the DNA template at 37 degrees Celsius. Can only incorporate dATP opposite 8-oxo-dG to bypass oxidative damage of the DNA template at 37 degrees Celsius, but complete loss of the bypass ability at 70 degrees Celsius." evidence="3">
    <original>R</original>
    <variation>A</variation>
    <location>
        <position position="49"/>
    </location>
</feature>
<feature type="mutagenesis site" description="20-fold lower dsDNA-binding compared to wild-type. Bypasses 8-oxo-dG oxidative damage of the DNA template at 37 degrees Celsius, but partial loss of the bypass ability at 70 degrees Celsius." evidence="3">
    <original>A</original>
    <variation>E</variation>
    <location>
        <position position="56"/>
    </location>
</feature>
<feature type="mutagenesis site" description="Decreased primer extension activity compared to wild-type. Forms correct base pairs to an extent with adenine, cytosine and thymine of the DNA template at 37 degrees Celsius. No incorporation of dATP, dGTP, dCTP, dTTP or dNTP mixes opposite 8-oxo-dG to bypass oxidative damage of the DNA template at neither 37 nor 70 degrees Celsius." evidence="3">
    <original>D</original>
    <variation>A</variation>
    <location>
        <position position="103"/>
    </location>
</feature>
<feature type="mutagenesis site" description="20-fold lower dsDNA-binding compared to wild-type." evidence="3">
    <original>K</original>
    <variation>A</variation>
    <location>
        <position position="147"/>
    </location>
</feature>
<feature type="mutagenesis site" description="Significantly decreased primer extension activity compared to wild-type. Forms correct, but not incorrect base pairs with the DNA template at 37 degrees Celsius. No incorporation of dATP, dGTP, dCTP, dTTP or dNTP mixes opposite 8-oxo-dG to bypass oxidative damage of the DNA template at neither 37 nor 70 degrees Celsius." evidence="3">
    <original>K</original>
    <variation>A</variation>
    <location>
        <position position="154"/>
    </location>
</feature>
<feature type="mutagenesis site" description="20-fold lower dsDNA-binding compared to wild-type." evidence="3">
    <original>G</original>
    <variation>V</variation>
    <location>
        <position position="180"/>
    </location>
</feature>
<feature type="mutagenesis site" description="Significantly decreased dsDNA-binding compared to wild-type." evidence="3">
    <original>G</original>
    <variation>E</variation>
    <location>
        <position position="182"/>
    </location>
</feature>
<feature type="mutagenesis site" description="Significantly decreased dsDNA-binding compared to wild-type." evidence="3">
    <original>S</original>
    <variation>A</variation>
    <location>
        <position position="185"/>
    </location>
</feature>
<feature type="mutagenesis site" description="20-fold lower dsDNA-binding compared to wild-type; when associated with E-241." evidence="3">
    <original>I</original>
    <variation>A</variation>
    <location>
        <position position="240"/>
    </location>
</feature>
<feature type="mutagenesis site" description="20-fold lower dsDNA-binding compared to wild-type; when associated with A-240." evidence="3">
    <original>G</original>
    <variation>E</variation>
    <location>
        <position position="241"/>
    </location>
</feature>
<feature type="mutagenesis site" description="Significantly decreased dsDNA-binding compared to wild-type." evidence="3">
    <original>T</original>
    <variation>A</variation>
    <location>
        <position position="245"/>
    </location>
</feature>
<feature type="mutagenesis site" description="Significantly decreased dsDNA-binding compared to wild-type. Bypasses 8-oxo-dG oxidative damage of the DNA template at 37 degrees Celsius, but partial loss of the bypass ability at 70 degrees Celsius." evidence="3">
    <original>F</original>
    <variation>A</variation>
    <location>
        <position position="290"/>
    </location>
</feature>
<feature type="mutagenesis site" description="20-fold lower dsDNA-binding compared to wild-type; when associated with A-298." evidence="3">
    <original>K</original>
    <variation>A</variation>
    <location>
        <position position="297"/>
    </location>
</feature>
<feature type="mutagenesis site" description="20-fold lower dsDNA-binding compared to wild-type; when associated with A-297." evidence="3">
    <original>T</original>
    <variation>A</variation>
    <location>
        <position position="298"/>
    </location>
</feature>
<feature type="mutagenesis site" description="Significantly decreased dsDNA-binding compared to wild-type. Bypasses 8-oxo-dG oxidative damage of the DNA template at 37 degrees Celsius, but complete loss of the bypass ability at 70 degrees Celsius." evidence="3">
    <original>R</original>
    <variation>A</variation>
    <location>
        <position position="327"/>
    </location>
</feature>
<name>DPO4_CALS4</name>
<accession>P58965</accession>
<accession>Q8RD00</accession>
<comment type="function">
    <text evidence="1 2 3">Poorly processive, error-prone DNA polymerase involved in translesion repair and untargeted mutagenesis. Copies undamaged DNA at stalled replication forks, which arise in vivo from mismatched or misaligned primer ends. These misaligned primers can be extended by PolIV. Exhibits no 3'-5' exonuclease (proofreading) activity (By similarity). Involved in translesional synthesis. Primer extension fidelity in vitro is temperature-dependent. Inserts a correct base opposite templating bases at 70 degrees Celsius, but at 37 degrees Celsius in addition to correct base pairing, base transitions, transversions and frameshifts can occur. Preferably forms erroneous base pairs C:T. Bypasses 8-oxo-dG oxidative damage by incorporating dATP or dCTP opposite of the damaged DNA template site at both temperatures in vitro (PubMed:37683741).</text>
</comment>
<comment type="catalytic activity">
    <reaction evidence="2 3">
        <text>DNA(n) + a 2'-deoxyribonucleoside 5'-triphosphate = DNA(n+1) + diphosphate</text>
        <dbReference type="Rhea" id="RHEA:22508"/>
        <dbReference type="Rhea" id="RHEA-COMP:17339"/>
        <dbReference type="Rhea" id="RHEA-COMP:17340"/>
        <dbReference type="ChEBI" id="CHEBI:33019"/>
        <dbReference type="ChEBI" id="CHEBI:61560"/>
        <dbReference type="ChEBI" id="CHEBI:173112"/>
        <dbReference type="EC" id="2.7.7.7"/>
    </reaction>
</comment>
<comment type="cofactor">
    <cofactor evidence="2 3">
        <name>Mg(2+)</name>
        <dbReference type="ChEBI" id="CHEBI:18420"/>
    </cofactor>
    <text evidence="2 3">Binds 1 magnesium ion per subunit.</text>
</comment>
<comment type="biophysicochemical properties">
    <temperatureDependence>
        <text evidence="4">Optimum temperature is around 70 degrees Celsius for the DNA polymerase activity. Active also at 25 degrees Celsius, but polymerase activity increases with increasing temperature. Activity decreases with temperatures higher than 70 degrees Celsius.</text>
    </temperatureDependence>
</comment>
<comment type="subunit">
    <text evidence="2 3">Monomer.</text>
</comment>
<comment type="subcellular location">
    <subcellularLocation>
        <location evidence="2">Cytoplasm</location>
    </subcellularLocation>
</comment>
<comment type="domain">
    <text evidence="5">The catalytic core consists of residues from subdomains of the finger (11-75), palm (77-161), thumb (163-224) and little finger (240-335).</text>
</comment>
<comment type="similarity">
    <text evidence="2 4">Belongs to the DNA polymerase type-Y family.</text>
</comment>